<accession>A4JF65</accession>
<name>LPXD_BURVG</name>
<comment type="function">
    <text evidence="1">Catalyzes the N-acylation of UDP-3-O-acylglucosamine using 3-hydroxyacyl-ACP as the acyl donor. Is involved in the biosynthesis of lipid A, a phosphorylated glycolipid that anchors the lipopolysaccharide to the outer membrane of the cell.</text>
</comment>
<comment type="catalytic activity">
    <reaction evidence="1">
        <text>a UDP-3-O-[(3R)-3-hydroxyacyl]-alpha-D-glucosamine + a (3R)-hydroxyacyl-[ACP] = a UDP-2-N,3-O-bis[(3R)-3-hydroxyacyl]-alpha-D-glucosamine + holo-[ACP] + H(+)</text>
        <dbReference type="Rhea" id="RHEA:53836"/>
        <dbReference type="Rhea" id="RHEA-COMP:9685"/>
        <dbReference type="Rhea" id="RHEA-COMP:9945"/>
        <dbReference type="ChEBI" id="CHEBI:15378"/>
        <dbReference type="ChEBI" id="CHEBI:64479"/>
        <dbReference type="ChEBI" id="CHEBI:78827"/>
        <dbReference type="ChEBI" id="CHEBI:137740"/>
        <dbReference type="ChEBI" id="CHEBI:137748"/>
        <dbReference type="EC" id="2.3.1.191"/>
    </reaction>
</comment>
<comment type="pathway">
    <text evidence="1">Bacterial outer membrane biogenesis; LPS lipid A biosynthesis.</text>
</comment>
<comment type="subunit">
    <text evidence="1">Homotrimer.</text>
</comment>
<comment type="similarity">
    <text evidence="1">Belongs to the transferase hexapeptide repeat family. LpxD subfamily.</text>
</comment>
<dbReference type="EC" id="2.3.1.191" evidence="1"/>
<dbReference type="EMBL" id="CP000614">
    <property type="protein sequence ID" value="ABO54918.1"/>
    <property type="molecule type" value="Genomic_DNA"/>
</dbReference>
<dbReference type="SMR" id="A4JF65"/>
<dbReference type="KEGG" id="bvi:Bcep1808_1915"/>
<dbReference type="eggNOG" id="COG1044">
    <property type="taxonomic scope" value="Bacteria"/>
</dbReference>
<dbReference type="HOGENOM" id="CLU_049865_0_1_4"/>
<dbReference type="UniPathway" id="UPA00973"/>
<dbReference type="Proteomes" id="UP000002287">
    <property type="component" value="Chromosome 1"/>
</dbReference>
<dbReference type="GO" id="GO:0016020">
    <property type="term" value="C:membrane"/>
    <property type="evidence" value="ECO:0007669"/>
    <property type="project" value="GOC"/>
</dbReference>
<dbReference type="GO" id="GO:0016410">
    <property type="term" value="F:N-acyltransferase activity"/>
    <property type="evidence" value="ECO:0007669"/>
    <property type="project" value="InterPro"/>
</dbReference>
<dbReference type="GO" id="GO:0009245">
    <property type="term" value="P:lipid A biosynthetic process"/>
    <property type="evidence" value="ECO:0007669"/>
    <property type="project" value="UniProtKB-UniRule"/>
</dbReference>
<dbReference type="CDD" id="cd03352">
    <property type="entry name" value="LbH_LpxD"/>
    <property type="match status" value="1"/>
</dbReference>
<dbReference type="Gene3D" id="1.20.5.170">
    <property type="match status" value="1"/>
</dbReference>
<dbReference type="Gene3D" id="2.160.10.10">
    <property type="entry name" value="Hexapeptide repeat proteins"/>
    <property type="match status" value="1"/>
</dbReference>
<dbReference type="Gene3D" id="3.40.1390.10">
    <property type="entry name" value="MurE/MurF, N-terminal domain"/>
    <property type="match status" value="1"/>
</dbReference>
<dbReference type="HAMAP" id="MF_00523">
    <property type="entry name" value="LpxD"/>
    <property type="match status" value="1"/>
</dbReference>
<dbReference type="InterPro" id="IPR001451">
    <property type="entry name" value="Hexapep"/>
</dbReference>
<dbReference type="InterPro" id="IPR018357">
    <property type="entry name" value="Hexapep_transf_CS"/>
</dbReference>
<dbReference type="InterPro" id="IPR007691">
    <property type="entry name" value="LpxD"/>
</dbReference>
<dbReference type="InterPro" id="IPR011004">
    <property type="entry name" value="Trimer_LpxA-like_sf"/>
</dbReference>
<dbReference type="InterPro" id="IPR020573">
    <property type="entry name" value="UDP_GlcNAc_AcTrfase_non-rep"/>
</dbReference>
<dbReference type="NCBIfam" id="TIGR01853">
    <property type="entry name" value="lipid_A_lpxD"/>
    <property type="match status" value="1"/>
</dbReference>
<dbReference type="NCBIfam" id="NF002060">
    <property type="entry name" value="PRK00892.1"/>
    <property type="match status" value="1"/>
</dbReference>
<dbReference type="PANTHER" id="PTHR43378">
    <property type="entry name" value="UDP-3-O-ACYLGLUCOSAMINE N-ACYLTRANSFERASE"/>
    <property type="match status" value="1"/>
</dbReference>
<dbReference type="PANTHER" id="PTHR43378:SF2">
    <property type="entry name" value="UDP-3-O-ACYLGLUCOSAMINE N-ACYLTRANSFERASE 1, MITOCHONDRIAL-RELATED"/>
    <property type="match status" value="1"/>
</dbReference>
<dbReference type="Pfam" id="PF00132">
    <property type="entry name" value="Hexapep"/>
    <property type="match status" value="2"/>
</dbReference>
<dbReference type="Pfam" id="PF14602">
    <property type="entry name" value="Hexapep_2"/>
    <property type="match status" value="1"/>
</dbReference>
<dbReference type="Pfam" id="PF04613">
    <property type="entry name" value="LpxD"/>
    <property type="match status" value="1"/>
</dbReference>
<dbReference type="SUPFAM" id="SSF51161">
    <property type="entry name" value="Trimeric LpxA-like enzymes"/>
    <property type="match status" value="1"/>
</dbReference>
<dbReference type="PROSITE" id="PS00101">
    <property type="entry name" value="HEXAPEP_TRANSFERASES"/>
    <property type="match status" value="3"/>
</dbReference>
<reference key="1">
    <citation type="submission" date="2007-03" db="EMBL/GenBank/DDBJ databases">
        <title>Complete sequence of chromosome 1 of Burkholderia vietnamiensis G4.</title>
        <authorList>
            <consortium name="US DOE Joint Genome Institute"/>
            <person name="Copeland A."/>
            <person name="Lucas S."/>
            <person name="Lapidus A."/>
            <person name="Barry K."/>
            <person name="Detter J.C."/>
            <person name="Glavina del Rio T."/>
            <person name="Hammon N."/>
            <person name="Israni S."/>
            <person name="Dalin E."/>
            <person name="Tice H."/>
            <person name="Pitluck S."/>
            <person name="Chain P."/>
            <person name="Malfatti S."/>
            <person name="Shin M."/>
            <person name="Vergez L."/>
            <person name="Schmutz J."/>
            <person name="Larimer F."/>
            <person name="Land M."/>
            <person name="Hauser L."/>
            <person name="Kyrpides N."/>
            <person name="Tiedje J."/>
            <person name="Richardson P."/>
        </authorList>
    </citation>
    <scope>NUCLEOTIDE SEQUENCE [LARGE SCALE GENOMIC DNA]</scope>
    <source>
        <strain>G4 / LMG 22486</strain>
    </source>
</reference>
<organism>
    <name type="scientific">Burkholderia vietnamiensis (strain G4 / LMG 22486)</name>
    <name type="common">Burkholderia cepacia (strain R1808)</name>
    <dbReference type="NCBI Taxonomy" id="269482"/>
    <lineage>
        <taxon>Bacteria</taxon>
        <taxon>Pseudomonadati</taxon>
        <taxon>Pseudomonadota</taxon>
        <taxon>Betaproteobacteria</taxon>
        <taxon>Burkholderiales</taxon>
        <taxon>Burkholderiaceae</taxon>
        <taxon>Burkholderia</taxon>
        <taxon>Burkholderia cepacia complex</taxon>
    </lineage>
</organism>
<gene>
    <name evidence="1" type="primary">lpxD</name>
    <name type="ordered locus">Bcep1808_1915</name>
</gene>
<sequence>MALTLEALVKRFGGEIVGDAQCTVSGLAPLDQAGPQQLAFLANPKYLSQVETSGAGAVLIAPKDLEKLGAAEGSLTSGPRTAGPSNFIVTANPYAYFARVAQMFIDLATPPRAAGVHPSATIDPSAQVAASAVIGPHVTIEAGAVIADDVQLDAGVFVGRGTTIGAGSHLYPNAAVYHGCKIGPRAIIHAGAVIGSDGFGFAPDFVGDGDARTGSWVKIPQVGGVSIGPDVEIGANTTIDRGAMADTVIEACVKIDNQVQIGHNCRIGAYTVIAGSAGIAGSTTIGRHCMIGGAAGIAGHVTLGDYVIITAKSGVSKSLPKAGIYTSAFPAVDHGEWNRSAALVRNLDKLRDRIKALETALAAQGGTDA</sequence>
<protein>
    <recommendedName>
        <fullName evidence="1">UDP-3-O-acylglucosamine N-acyltransferase</fullName>
        <ecNumber evidence="1">2.3.1.191</ecNumber>
    </recommendedName>
</protein>
<feature type="chain" id="PRO_1000050936" description="UDP-3-O-acylglucosamine N-acyltransferase">
    <location>
        <begin position="1"/>
        <end position="369"/>
    </location>
</feature>
<feature type="active site" description="Proton acceptor" evidence="1">
    <location>
        <position position="263"/>
    </location>
</feature>
<keyword id="KW-0012">Acyltransferase</keyword>
<keyword id="KW-0441">Lipid A biosynthesis</keyword>
<keyword id="KW-0444">Lipid biosynthesis</keyword>
<keyword id="KW-0443">Lipid metabolism</keyword>
<keyword id="KW-0677">Repeat</keyword>
<keyword id="KW-0808">Transferase</keyword>
<proteinExistence type="inferred from homology"/>
<evidence type="ECO:0000255" key="1">
    <source>
        <dbReference type="HAMAP-Rule" id="MF_00523"/>
    </source>
</evidence>